<reference key="1">
    <citation type="journal article" date="2006" name="Mamm. Genome">
        <title>Investigation of the role of the agouti signaling protein gene (ASIP) in coat color evolution in primates.</title>
        <authorList>
            <person name="Mundy N.I."/>
            <person name="Kelly J."/>
        </authorList>
    </citation>
    <scope>NUCLEOTIDE SEQUENCE [GENOMIC DNA]</scope>
</reference>
<reference key="2">
    <citation type="submission" date="2007-03" db="EMBL/GenBank/DDBJ databases">
        <title>Association of the agouti signaling protein gene with coat color variation in the macaques.</title>
        <authorList>
            <person name="Nakayama K."/>
            <person name="Shotake T."/>
            <person name="Takenaka O."/>
            <person name="Ishida T."/>
        </authorList>
    </citation>
    <scope>NUCLEOTIDE SEQUENCE [GENOMIC DNA]</scope>
</reference>
<evidence type="ECO:0000250" key="1"/>
<evidence type="ECO:0000250" key="2">
    <source>
        <dbReference type="UniProtKB" id="P42127"/>
    </source>
</evidence>
<evidence type="ECO:0000250" key="3">
    <source>
        <dbReference type="UniProtKB" id="Q03288"/>
    </source>
</evidence>
<evidence type="ECO:0000255" key="4"/>
<evidence type="ECO:0000255" key="5">
    <source>
        <dbReference type="PROSITE-ProRule" id="PRU00494"/>
    </source>
</evidence>
<evidence type="ECO:0000256" key="6">
    <source>
        <dbReference type="SAM" id="MobiDB-lite"/>
    </source>
</evidence>
<sequence>MDVTRLLLATLLVFLCFFTAYSHLPPEEKLRDDRSLRSNSSVNLLDFPSVSIMALNKNSKEISRKEAEKKRSSKKEASMKKVARPRTPLSAPCVATRDSCKPPAPACCDPCASCQCRFFRSACSCRVLSLNC</sequence>
<name>ASIP_MACMU</name>
<dbReference type="EMBL" id="EF094484">
    <property type="protein sequence ID" value="ABL84282.1"/>
    <property type="molecule type" value="Genomic_DNA"/>
</dbReference>
<dbReference type="EMBL" id="AB299207">
    <property type="protein sequence ID" value="BAF80791.1"/>
    <property type="molecule type" value="Genomic_DNA"/>
</dbReference>
<dbReference type="RefSeq" id="XP_015004667.1">
    <property type="nucleotide sequence ID" value="XM_015149181.2"/>
</dbReference>
<dbReference type="RefSeq" id="XP_028684168.1">
    <property type="nucleotide sequence ID" value="XM_028828335.1"/>
</dbReference>
<dbReference type="RefSeq" id="XP_028684169.1">
    <property type="nucleotide sequence ID" value="XM_028828336.1"/>
</dbReference>
<dbReference type="FunCoup" id="A1YL67">
    <property type="interactions" value="249"/>
</dbReference>
<dbReference type="STRING" id="9544.ENSMMUP00000077604"/>
<dbReference type="GlyCosmos" id="A1YL67">
    <property type="glycosylation" value="1 site, No reported glycans"/>
</dbReference>
<dbReference type="PaxDb" id="9544-ENSMMUP00000037733"/>
<dbReference type="Ensembl" id="ENSMMUT00000104405.1">
    <property type="protein sequence ID" value="ENSMMUP00000077604.1"/>
    <property type="gene ID" value="ENSMMUG00000061171.1"/>
</dbReference>
<dbReference type="GeneID" id="709156"/>
<dbReference type="KEGG" id="mcc:709156"/>
<dbReference type="CTD" id="434"/>
<dbReference type="VEuPathDB" id="HostDB:ENSMMUG00000061171"/>
<dbReference type="eggNOG" id="ENOG502S5XF">
    <property type="taxonomic scope" value="Eukaryota"/>
</dbReference>
<dbReference type="GeneTree" id="ENSGT00940000154258"/>
<dbReference type="HOGENOM" id="CLU_2746535_0_0_1"/>
<dbReference type="InParanoid" id="A1YL67"/>
<dbReference type="OMA" id="CHCRFFR"/>
<dbReference type="Proteomes" id="UP000006718">
    <property type="component" value="Chromosome 10"/>
</dbReference>
<dbReference type="Bgee" id="ENSMMUG00000061171">
    <property type="expression patterns" value="Expressed in heart and 9 other cell types or tissues"/>
</dbReference>
<dbReference type="ExpressionAtlas" id="A1YL67">
    <property type="expression patterns" value="baseline"/>
</dbReference>
<dbReference type="GO" id="GO:0005615">
    <property type="term" value="C:extracellular space"/>
    <property type="evidence" value="ECO:0000250"/>
    <property type="project" value="UniProtKB"/>
</dbReference>
<dbReference type="GO" id="GO:0031779">
    <property type="term" value="F:melanocortin receptor binding"/>
    <property type="evidence" value="ECO:0000318"/>
    <property type="project" value="GO_Central"/>
</dbReference>
<dbReference type="GO" id="GO:0005184">
    <property type="term" value="F:neuropeptide hormone activity"/>
    <property type="evidence" value="ECO:0000318"/>
    <property type="project" value="GO_Central"/>
</dbReference>
<dbReference type="GO" id="GO:0031781">
    <property type="term" value="F:type 3 melanocortin receptor binding"/>
    <property type="evidence" value="ECO:0007669"/>
    <property type="project" value="Ensembl"/>
</dbReference>
<dbReference type="GO" id="GO:0031782">
    <property type="term" value="F:type 4 melanocortin receptor binding"/>
    <property type="evidence" value="ECO:0007669"/>
    <property type="project" value="Ensembl"/>
</dbReference>
<dbReference type="GO" id="GO:0008343">
    <property type="term" value="P:adult feeding behavior"/>
    <property type="evidence" value="ECO:0007669"/>
    <property type="project" value="Ensembl"/>
</dbReference>
<dbReference type="GO" id="GO:0044725">
    <property type="term" value="P:epigenetic programming in the zygotic pronuclei"/>
    <property type="evidence" value="ECO:0007669"/>
    <property type="project" value="Ensembl"/>
</dbReference>
<dbReference type="GO" id="GO:0006091">
    <property type="term" value="P:generation of precursor metabolites and energy"/>
    <property type="evidence" value="ECO:0007669"/>
    <property type="project" value="Ensembl"/>
</dbReference>
<dbReference type="GO" id="GO:0009755">
    <property type="term" value="P:hormone-mediated signaling pathway"/>
    <property type="evidence" value="ECO:0007669"/>
    <property type="project" value="InterPro"/>
</dbReference>
<dbReference type="GO" id="GO:0042438">
    <property type="term" value="P:melanin biosynthetic process"/>
    <property type="evidence" value="ECO:0000250"/>
    <property type="project" value="UniProtKB"/>
</dbReference>
<dbReference type="GO" id="GO:0032438">
    <property type="term" value="P:melanosome organization"/>
    <property type="evidence" value="ECO:0000318"/>
    <property type="project" value="GO_Central"/>
</dbReference>
<dbReference type="GO" id="GO:0032402">
    <property type="term" value="P:melanosome transport"/>
    <property type="evidence" value="ECO:0007669"/>
    <property type="project" value="Ensembl"/>
</dbReference>
<dbReference type="GO" id="GO:0048023">
    <property type="term" value="P:positive regulation of melanin biosynthetic process"/>
    <property type="evidence" value="ECO:0007669"/>
    <property type="project" value="Ensembl"/>
</dbReference>
<dbReference type="FunFam" id="4.10.760.10:FF:000002">
    <property type="entry name" value="Agouti-signaling protein"/>
    <property type="match status" value="1"/>
</dbReference>
<dbReference type="Gene3D" id="4.10.760.10">
    <property type="entry name" value="Agouti domain"/>
    <property type="match status" value="1"/>
</dbReference>
<dbReference type="InterPro" id="IPR007733">
    <property type="entry name" value="Agouti"/>
</dbReference>
<dbReference type="InterPro" id="IPR027300">
    <property type="entry name" value="Agouti_dom"/>
</dbReference>
<dbReference type="InterPro" id="IPR036836">
    <property type="entry name" value="Agouti_dom_sf"/>
</dbReference>
<dbReference type="PANTHER" id="PTHR16551">
    <property type="entry name" value="AGOUTI RELATED"/>
    <property type="match status" value="1"/>
</dbReference>
<dbReference type="PANTHER" id="PTHR16551:SF1">
    <property type="entry name" value="AGOUTI-SIGNALING PROTEIN"/>
    <property type="match status" value="1"/>
</dbReference>
<dbReference type="Pfam" id="PF05039">
    <property type="entry name" value="Agouti"/>
    <property type="match status" value="1"/>
</dbReference>
<dbReference type="SMART" id="SM00792">
    <property type="entry name" value="Agouti"/>
    <property type="match status" value="1"/>
</dbReference>
<dbReference type="SUPFAM" id="SSF57055">
    <property type="entry name" value="Agouti-related protein"/>
    <property type="match status" value="1"/>
</dbReference>
<dbReference type="PROSITE" id="PS60024">
    <property type="entry name" value="AGOUTI_1"/>
    <property type="match status" value="1"/>
</dbReference>
<dbReference type="PROSITE" id="PS51150">
    <property type="entry name" value="AGOUTI_2"/>
    <property type="match status" value="1"/>
</dbReference>
<feature type="signal peptide" evidence="4">
    <location>
        <begin position="1"/>
        <end position="22"/>
    </location>
</feature>
<feature type="chain" id="PRO_0000285056" description="Agouti-signaling protein">
    <location>
        <begin position="23"/>
        <end position="132"/>
    </location>
</feature>
<feature type="domain" description="Agouti" evidence="5">
    <location>
        <begin position="93"/>
        <end position="132"/>
    </location>
</feature>
<feature type="region of interest" description="Disordered" evidence="6">
    <location>
        <begin position="61"/>
        <end position="87"/>
    </location>
</feature>
<feature type="compositionally biased region" description="Basic and acidic residues" evidence="6">
    <location>
        <begin position="61"/>
        <end position="79"/>
    </location>
</feature>
<feature type="glycosylation site" description="N-linked (GlcNAc...) asparagine" evidence="4">
    <location>
        <position position="39"/>
    </location>
</feature>
<feature type="disulfide bond" evidence="5">
    <location>
        <begin position="93"/>
        <end position="108"/>
    </location>
</feature>
<feature type="disulfide bond" evidence="5">
    <location>
        <begin position="100"/>
        <end position="114"/>
    </location>
</feature>
<feature type="disulfide bond" evidence="5">
    <location>
        <begin position="107"/>
        <end position="125"/>
    </location>
</feature>
<feature type="disulfide bond" evidence="5">
    <location>
        <begin position="111"/>
        <end position="132"/>
    </location>
</feature>
<feature type="disulfide bond" evidence="5">
    <location>
        <begin position="116"/>
        <end position="123"/>
    </location>
</feature>
<organism>
    <name type="scientific">Macaca mulatta</name>
    <name type="common">Rhesus macaque</name>
    <dbReference type="NCBI Taxonomy" id="9544"/>
    <lineage>
        <taxon>Eukaryota</taxon>
        <taxon>Metazoa</taxon>
        <taxon>Chordata</taxon>
        <taxon>Craniata</taxon>
        <taxon>Vertebrata</taxon>
        <taxon>Euteleostomi</taxon>
        <taxon>Mammalia</taxon>
        <taxon>Eutheria</taxon>
        <taxon>Euarchontoglires</taxon>
        <taxon>Primates</taxon>
        <taxon>Haplorrhini</taxon>
        <taxon>Catarrhini</taxon>
        <taxon>Cercopithecidae</taxon>
        <taxon>Cercopithecinae</taxon>
        <taxon>Macaca</taxon>
    </lineage>
</organism>
<accession>A1YL67</accession>
<accession>A8CEL9</accession>
<gene>
    <name type="primary">ASIP</name>
</gene>
<comment type="function">
    <text evidence="3">Involved in the regulation of melanogenesis. The binding of ASP to MC1R precludes alpha-MSH initiated signaling and thus blocks production of cAMP, leading to a down-regulation of eumelanogenesis (brown/black pigment) and thus increasing synthesis of pheomelanin (yellow/red pigment) (By similarity).</text>
</comment>
<comment type="subcellular location">
    <subcellularLocation>
        <location evidence="2">Secreted</location>
    </subcellularLocation>
</comment>
<comment type="domain">
    <text evidence="1">The presence of a 'disulfide through disulfide knot' structurally defines this protein as a knottin.</text>
</comment>
<keyword id="KW-1015">Disulfide bond</keyword>
<keyword id="KW-0325">Glycoprotein</keyword>
<keyword id="KW-0960">Knottin</keyword>
<keyword id="KW-1185">Reference proteome</keyword>
<keyword id="KW-0964">Secreted</keyword>
<keyword id="KW-0732">Signal</keyword>
<protein>
    <recommendedName>
        <fullName>Agouti-signaling protein</fullName>
        <shortName>ASP</shortName>
    </recommendedName>
    <alternativeName>
        <fullName>Agouti switch protein</fullName>
    </alternativeName>
</protein>
<proteinExistence type="inferred from homology"/>